<name>BRXL4_ARATH</name>
<accession>Q8GZ92</accession>
<sequence>MLTCIARSKRAGDESSGQPDDPDSKNAKSLTSQLKDMALKASGAYRHCTPCTAAQGQGQGQGPIKNNPSSSSVKSDFESDQRFKMLYGRSNSSITATAAVAATQQQQPRVWGKEMEARLKGISSGEATPKSASGRNRVDPIVFVEEKEPKEWVAQVEPGVLITFVSLPGGGNDLKRIRFSRDMFNKLQAQRWWADNYDKVMELYNVQKLSRQAFPLPTPPRSEDENAKVEYHPEDTPATPPLNKERLPRTIHRPPGLAAYSSSDSLDHNSMQSQQFYDSGLLNSTPKVSSISVAKTETSSIDASIRSSSSRDADRSEEMSVSNASDVDNEWVEQDEPGVYITIKVLPGGKRELRRVRFSRERFGEMHARLWWEENRARIHEQYL</sequence>
<proteinExistence type="evidence at transcript level"/>
<comment type="subcellular location">
    <subcellularLocation>
        <location evidence="1">Nucleus</location>
    </subcellularLocation>
</comment>
<comment type="tissue specificity">
    <text evidence="4">Expressed in roots.</text>
</comment>
<comment type="similarity">
    <text evidence="5">Belongs to the BRX family.</text>
</comment>
<organism>
    <name type="scientific">Arabidopsis thaliana</name>
    <name type="common">Mouse-ear cress</name>
    <dbReference type="NCBI Taxonomy" id="3702"/>
    <lineage>
        <taxon>Eukaryota</taxon>
        <taxon>Viridiplantae</taxon>
        <taxon>Streptophyta</taxon>
        <taxon>Embryophyta</taxon>
        <taxon>Tracheophyta</taxon>
        <taxon>Spermatophyta</taxon>
        <taxon>Magnoliopsida</taxon>
        <taxon>eudicotyledons</taxon>
        <taxon>Gunneridae</taxon>
        <taxon>Pentapetalae</taxon>
        <taxon>rosids</taxon>
        <taxon>malvids</taxon>
        <taxon>Brassicales</taxon>
        <taxon>Brassicaceae</taxon>
        <taxon>Camelineae</taxon>
        <taxon>Arabidopsis</taxon>
    </lineage>
</organism>
<evidence type="ECO:0000250" key="1"/>
<evidence type="ECO:0000255" key="2">
    <source>
        <dbReference type="PROSITE-ProRule" id="PRU00847"/>
    </source>
</evidence>
<evidence type="ECO:0000256" key="3">
    <source>
        <dbReference type="SAM" id="MobiDB-lite"/>
    </source>
</evidence>
<evidence type="ECO:0000269" key="4">
    <source>
    </source>
</evidence>
<evidence type="ECO:0000305" key="5"/>
<feature type="chain" id="PRO_0000373825" description="Protein Brevis radix-like 4">
    <location>
        <begin position="1"/>
        <end position="384"/>
    </location>
</feature>
<feature type="domain" description="BRX 1" evidence="2">
    <location>
        <begin position="150"/>
        <end position="205"/>
    </location>
</feature>
<feature type="domain" description="BRX 2" evidence="2">
    <location>
        <begin position="329"/>
        <end position="384"/>
    </location>
</feature>
<feature type="region of interest" description="Disordered" evidence="3">
    <location>
        <begin position="1"/>
        <end position="35"/>
    </location>
</feature>
<feature type="region of interest" description="Disordered" evidence="3">
    <location>
        <begin position="50"/>
        <end position="78"/>
    </location>
</feature>
<feature type="region of interest" description="Disordered" evidence="3">
    <location>
        <begin position="214"/>
        <end position="270"/>
    </location>
</feature>
<feature type="region of interest" description="Disordered" evidence="3">
    <location>
        <begin position="304"/>
        <end position="325"/>
    </location>
</feature>
<feature type="compositionally biased region" description="Basic and acidic residues" evidence="3">
    <location>
        <begin position="221"/>
        <end position="235"/>
    </location>
</feature>
<feature type="compositionally biased region" description="Polar residues" evidence="3">
    <location>
        <begin position="260"/>
        <end position="270"/>
    </location>
</feature>
<feature type="compositionally biased region" description="Basic and acidic residues" evidence="3">
    <location>
        <begin position="309"/>
        <end position="318"/>
    </location>
</feature>
<gene>
    <name type="primary">BRXL4</name>
    <name type="ordered locus">At5g20540</name>
    <name type="ORF">F7C8.130</name>
</gene>
<keyword id="KW-0539">Nucleus</keyword>
<keyword id="KW-1185">Reference proteome</keyword>
<keyword id="KW-0677">Repeat</keyword>
<dbReference type="EMBL" id="AF296833">
    <property type="status" value="NOT_ANNOTATED_CDS"/>
    <property type="molecule type" value="Genomic_DNA"/>
</dbReference>
<dbReference type="EMBL" id="CP002688">
    <property type="protein sequence ID" value="AED92856.1"/>
    <property type="molecule type" value="Genomic_DNA"/>
</dbReference>
<dbReference type="EMBL" id="AK117133">
    <property type="protein sequence ID" value="BAC41811.1"/>
    <property type="molecule type" value="mRNA"/>
</dbReference>
<dbReference type="RefSeq" id="NP_197554.2">
    <property type="nucleotide sequence ID" value="NM_122061.4"/>
</dbReference>
<dbReference type="SMR" id="Q8GZ92"/>
<dbReference type="FunCoup" id="Q8GZ92">
    <property type="interactions" value="552"/>
</dbReference>
<dbReference type="STRING" id="3702.Q8GZ92"/>
<dbReference type="GlyGen" id="Q8GZ92">
    <property type="glycosylation" value="1 site"/>
</dbReference>
<dbReference type="iPTMnet" id="Q8GZ92"/>
<dbReference type="PaxDb" id="3702-AT5G20540.1"/>
<dbReference type="ProteomicsDB" id="240509"/>
<dbReference type="EnsemblPlants" id="AT5G20540.1">
    <property type="protein sequence ID" value="AT5G20540.1"/>
    <property type="gene ID" value="AT5G20540"/>
</dbReference>
<dbReference type="GeneID" id="832176"/>
<dbReference type="Gramene" id="AT5G20540.1">
    <property type="protein sequence ID" value="AT5G20540.1"/>
    <property type="gene ID" value="AT5G20540"/>
</dbReference>
<dbReference type="KEGG" id="ath:AT5G20540"/>
<dbReference type="Araport" id="AT5G20540"/>
<dbReference type="TAIR" id="AT5G20540">
    <property type="gene designation" value="BRXL4"/>
</dbReference>
<dbReference type="eggNOG" id="ENOG502QQJI">
    <property type="taxonomic scope" value="Eukaryota"/>
</dbReference>
<dbReference type="HOGENOM" id="CLU_033380_0_1_1"/>
<dbReference type="InParanoid" id="Q8GZ92"/>
<dbReference type="OMA" id="EREPKEW"/>
<dbReference type="PhylomeDB" id="Q8GZ92"/>
<dbReference type="PRO" id="PR:Q8GZ92"/>
<dbReference type="Proteomes" id="UP000006548">
    <property type="component" value="Chromosome 5"/>
</dbReference>
<dbReference type="ExpressionAtlas" id="Q8GZ92">
    <property type="expression patterns" value="baseline and differential"/>
</dbReference>
<dbReference type="GO" id="GO:0005634">
    <property type="term" value="C:nucleus"/>
    <property type="evidence" value="ECO:0007669"/>
    <property type="project" value="UniProtKB-SubCell"/>
</dbReference>
<dbReference type="InterPro" id="IPR013591">
    <property type="entry name" value="Brevis_radix_dom"/>
</dbReference>
<dbReference type="InterPro" id="IPR044532">
    <property type="entry name" value="BRX-like"/>
</dbReference>
<dbReference type="InterPro" id="IPR027988">
    <property type="entry name" value="BRX_N"/>
</dbReference>
<dbReference type="PANTHER" id="PTHR46058">
    <property type="entry name" value="PROTEIN BREVIS RADIX-LIKE 1"/>
    <property type="match status" value="1"/>
</dbReference>
<dbReference type="PANTHER" id="PTHR46058:SF3">
    <property type="entry name" value="PROTEIN BREVIS RADIX-LIKE 4"/>
    <property type="match status" value="1"/>
</dbReference>
<dbReference type="Pfam" id="PF08381">
    <property type="entry name" value="BRX"/>
    <property type="match status" value="2"/>
</dbReference>
<dbReference type="Pfam" id="PF13713">
    <property type="entry name" value="BRX_N"/>
    <property type="match status" value="1"/>
</dbReference>
<dbReference type="PROSITE" id="PS51514">
    <property type="entry name" value="BRX"/>
    <property type="match status" value="2"/>
</dbReference>
<protein>
    <recommendedName>
        <fullName>Protein Brevis radix-like 4</fullName>
        <shortName>AtBRXL4</shortName>
    </recommendedName>
</protein>
<reference key="1">
    <citation type="journal article" date="2000" name="Nature">
        <title>Sequence and analysis of chromosome 5 of the plant Arabidopsis thaliana.</title>
        <authorList>
            <person name="Tabata S."/>
            <person name="Kaneko T."/>
            <person name="Nakamura Y."/>
            <person name="Kotani H."/>
            <person name="Kato T."/>
            <person name="Asamizu E."/>
            <person name="Miyajima N."/>
            <person name="Sasamoto S."/>
            <person name="Kimura T."/>
            <person name="Hosouchi T."/>
            <person name="Kawashima K."/>
            <person name="Kohara M."/>
            <person name="Matsumoto M."/>
            <person name="Matsuno A."/>
            <person name="Muraki A."/>
            <person name="Nakayama S."/>
            <person name="Nakazaki N."/>
            <person name="Naruo K."/>
            <person name="Okumura S."/>
            <person name="Shinpo S."/>
            <person name="Takeuchi C."/>
            <person name="Wada T."/>
            <person name="Watanabe A."/>
            <person name="Yamada M."/>
            <person name="Yasuda M."/>
            <person name="Sato S."/>
            <person name="de la Bastide M."/>
            <person name="Huang E."/>
            <person name="Spiegel L."/>
            <person name="Gnoj L."/>
            <person name="O'Shaughnessy A."/>
            <person name="Preston R."/>
            <person name="Habermann K."/>
            <person name="Murray J."/>
            <person name="Johnson D."/>
            <person name="Rohlfing T."/>
            <person name="Nelson J."/>
            <person name="Stoneking T."/>
            <person name="Pepin K."/>
            <person name="Spieth J."/>
            <person name="Sekhon M."/>
            <person name="Armstrong J."/>
            <person name="Becker M."/>
            <person name="Belter E."/>
            <person name="Cordum H."/>
            <person name="Cordes M."/>
            <person name="Courtney L."/>
            <person name="Courtney W."/>
            <person name="Dante M."/>
            <person name="Du H."/>
            <person name="Edwards J."/>
            <person name="Fryman J."/>
            <person name="Haakensen B."/>
            <person name="Lamar E."/>
            <person name="Latreille P."/>
            <person name="Leonard S."/>
            <person name="Meyer R."/>
            <person name="Mulvaney E."/>
            <person name="Ozersky P."/>
            <person name="Riley A."/>
            <person name="Strowmatt C."/>
            <person name="Wagner-McPherson C."/>
            <person name="Wollam A."/>
            <person name="Yoakum M."/>
            <person name="Bell M."/>
            <person name="Dedhia N."/>
            <person name="Parnell L."/>
            <person name="Shah R."/>
            <person name="Rodriguez M."/>
            <person name="Hoon See L."/>
            <person name="Vil D."/>
            <person name="Baker J."/>
            <person name="Kirchoff K."/>
            <person name="Toth K."/>
            <person name="King L."/>
            <person name="Bahret A."/>
            <person name="Miller B."/>
            <person name="Marra M.A."/>
            <person name="Martienssen R."/>
            <person name="McCombie W.R."/>
            <person name="Wilson R.K."/>
            <person name="Murphy G."/>
            <person name="Bancroft I."/>
            <person name="Volckaert G."/>
            <person name="Wambutt R."/>
            <person name="Duesterhoeft A."/>
            <person name="Stiekema W."/>
            <person name="Pohl T."/>
            <person name="Entian K.-D."/>
            <person name="Terryn N."/>
            <person name="Hartley N."/>
            <person name="Bent E."/>
            <person name="Johnson S."/>
            <person name="Langham S.-A."/>
            <person name="McCullagh B."/>
            <person name="Robben J."/>
            <person name="Grymonprez B."/>
            <person name="Zimmermann W."/>
            <person name="Ramsperger U."/>
            <person name="Wedler H."/>
            <person name="Balke K."/>
            <person name="Wedler E."/>
            <person name="Peters S."/>
            <person name="van Staveren M."/>
            <person name="Dirkse W."/>
            <person name="Mooijman P."/>
            <person name="Klein Lankhorst R."/>
            <person name="Weitzenegger T."/>
            <person name="Bothe G."/>
            <person name="Rose M."/>
            <person name="Hauf J."/>
            <person name="Berneiser S."/>
            <person name="Hempel S."/>
            <person name="Feldpausch M."/>
            <person name="Lamberth S."/>
            <person name="Villarroel R."/>
            <person name="Gielen J."/>
            <person name="Ardiles W."/>
            <person name="Bents O."/>
            <person name="Lemcke K."/>
            <person name="Kolesov G."/>
            <person name="Mayer K.F.X."/>
            <person name="Rudd S."/>
            <person name="Schoof H."/>
            <person name="Schueller C."/>
            <person name="Zaccaria P."/>
            <person name="Mewes H.-W."/>
            <person name="Bevan M."/>
            <person name="Fransz P.F."/>
        </authorList>
    </citation>
    <scope>NUCLEOTIDE SEQUENCE [LARGE SCALE GENOMIC DNA]</scope>
    <source>
        <strain>cv. Columbia</strain>
    </source>
</reference>
<reference key="2">
    <citation type="journal article" date="2017" name="Plant J.">
        <title>Araport11: a complete reannotation of the Arabidopsis thaliana reference genome.</title>
        <authorList>
            <person name="Cheng C.Y."/>
            <person name="Krishnakumar V."/>
            <person name="Chan A.P."/>
            <person name="Thibaud-Nissen F."/>
            <person name="Schobel S."/>
            <person name="Town C.D."/>
        </authorList>
    </citation>
    <scope>GENOME REANNOTATION</scope>
    <source>
        <strain>cv. Columbia</strain>
    </source>
</reference>
<reference key="3">
    <citation type="journal article" date="2002" name="Science">
        <title>Functional annotation of a full-length Arabidopsis cDNA collection.</title>
        <authorList>
            <person name="Seki M."/>
            <person name="Narusaka M."/>
            <person name="Kamiya A."/>
            <person name="Ishida J."/>
            <person name="Satou M."/>
            <person name="Sakurai T."/>
            <person name="Nakajima M."/>
            <person name="Enju A."/>
            <person name="Akiyama K."/>
            <person name="Oono Y."/>
            <person name="Muramatsu M."/>
            <person name="Hayashizaki Y."/>
            <person name="Kawai J."/>
            <person name="Carninci P."/>
            <person name="Itoh M."/>
            <person name="Ishii Y."/>
            <person name="Arakawa T."/>
            <person name="Shibata K."/>
            <person name="Shinagawa A."/>
            <person name="Shinozaki K."/>
        </authorList>
    </citation>
    <scope>NUCLEOTIDE SEQUENCE [LARGE SCALE MRNA]</scope>
    <source>
        <strain>cv. Columbia</strain>
    </source>
</reference>
<reference key="4">
    <citation type="journal article" date="2004" name="Genes Dev.">
        <title>Natural genetic variation in Arabidopsis identifies BREVIS RADIX, a novel regulator of cell proliferation and elongation in the root.</title>
        <authorList>
            <person name="Mouchel C.F."/>
            <person name="Briggs G.C."/>
            <person name="Hardtke C.S."/>
        </authorList>
    </citation>
    <scope>IDENTIFICATION</scope>
</reference>
<reference key="5">
    <citation type="journal article" date="2006" name="Plant Physiol.">
        <title>Characterization of the plant-specific BREVIS RADIX gene family reveals limited genetic redundancy despite high sequence conservation.</title>
        <authorList>
            <person name="Briggs G.C."/>
            <person name="Mouchel C.F."/>
            <person name="Hardtke C.S."/>
        </authorList>
    </citation>
    <scope>GENE FAMILY</scope>
    <scope>TISSUE SPECIFICITY</scope>
</reference>